<reference key="1">
    <citation type="journal article" date="1979" name="Nature">
        <title>Cytochrome c2 sequence variation among the recognised species of purple nonsulphur photosynthetic bacteria.</title>
        <authorList>
            <person name="Ambler R.P."/>
            <person name="Daniel M."/>
            <person name="Hermoso J."/>
            <person name="Meyer T.E."/>
            <person name="Bartsch R.G."/>
            <person name="Kamen M.D."/>
        </authorList>
    </citation>
    <scope>PROTEIN SEQUENCE</scope>
    <source>
        <strain>ATCC 35113 / DSM 113 / KCTC 15608 / NCIMB 11884 / 1360</strain>
    </source>
</reference>
<protein>
    <recommendedName>
        <fullName>Cytochrome c2 iso-2</fullName>
    </recommendedName>
</protein>
<evidence type="ECO:0000305" key="1"/>
<accession>P00089</accession>
<sequence>ADAPPAFGMCKACHSVEAGKNGVGPSLAGVYGRKAGTLAGFKFSDPHAKSGLTWDEPTLTKYLADPKGVIPGNKMVFAGLKNPADVAAVIAYLKSL</sequence>
<comment type="function">
    <text>Cytochrome c2 is found mainly in purple, non-sulfur, photosynthetic bacteria where it functions as the electron donor to the oxidized bacteriochlorophyll in the photophosphorylation pathway. However, it may also have a role in the respiratory chain and is found in some non-photosynthetic bacteria.</text>
</comment>
<comment type="PTM">
    <text>Binds 1 heme c group covalently per subunit.</text>
</comment>
<comment type="similarity">
    <text evidence="1">Belongs to the cytochrome c family.</text>
</comment>
<keyword id="KW-0903">Direct protein sequencing</keyword>
<keyword id="KW-0249">Electron transport</keyword>
<keyword id="KW-0349">Heme</keyword>
<keyword id="KW-0408">Iron</keyword>
<keyword id="KW-0479">Metal-binding</keyword>
<keyword id="KW-0602">Photosynthesis</keyword>
<keyword id="KW-0813">Transport</keyword>
<dbReference type="PIR" id="A00081">
    <property type="entry name" value="CCQFF2"/>
</dbReference>
<dbReference type="SMR" id="P00089"/>
<dbReference type="GO" id="GO:0009055">
    <property type="term" value="F:electron transfer activity"/>
    <property type="evidence" value="ECO:0007669"/>
    <property type="project" value="InterPro"/>
</dbReference>
<dbReference type="GO" id="GO:0020037">
    <property type="term" value="F:heme binding"/>
    <property type="evidence" value="ECO:0007669"/>
    <property type="project" value="InterPro"/>
</dbReference>
<dbReference type="GO" id="GO:0046872">
    <property type="term" value="F:metal ion binding"/>
    <property type="evidence" value="ECO:0007669"/>
    <property type="project" value="UniProtKB-KW"/>
</dbReference>
<dbReference type="GO" id="GO:0015979">
    <property type="term" value="P:photosynthesis"/>
    <property type="evidence" value="ECO:0007669"/>
    <property type="project" value="UniProtKB-KW"/>
</dbReference>
<dbReference type="Gene3D" id="1.10.760.10">
    <property type="entry name" value="Cytochrome c-like domain"/>
    <property type="match status" value="1"/>
</dbReference>
<dbReference type="InterPro" id="IPR009056">
    <property type="entry name" value="Cyt_c-like_dom"/>
</dbReference>
<dbReference type="InterPro" id="IPR036909">
    <property type="entry name" value="Cyt_c-like_dom_sf"/>
</dbReference>
<dbReference type="InterPro" id="IPR002327">
    <property type="entry name" value="Cyt_c_1A/1B"/>
</dbReference>
<dbReference type="PANTHER" id="PTHR11961">
    <property type="entry name" value="CYTOCHROME C"/>
    <property type="match status" value="1"/>
</dbReference>
<dbReference type="Pfam" id="PF00034">
    <property type="entry name" value="Cytochrom_C"/>
    <property type="match status" value="1"/>
</dbReference>
<dbReference type="PRINTS" id="PR00604">
    <property type="entry name" value="CYTCHRMECIAB"/>
</dbReference>
<dbReference type="SUPFAM" id="SSF46626">
    <property type="entry name" value="Cytochrome c"/>
    <property type="match status" value="1"/>
</dbReference>
<dbReference type="PROSITE" id="PS51007">
    <property type="entry name" value="CYTC"/>
    <property type="match status" value="1"/>
</dbReference>
<proteinExistence type="evidence at protein level"/>
<organism>
    <name type="scientific">Magnetospirillum fulvum</name>
    <name type="common">Rhodospirillum fulvum</name>
    <dbReference type="NCBI Taxonomy" id="1082"/>
    <lineage>
        <taxon>Bacteria</taxon>
        <taxon>Pseudomonadati</taxon>
        <taxon>Pseudomonadota</taxon>
        <taxon>Alphaproteobacteria</taxon>
        <taxon>Rhodospirillales</taxon>
        <taxon>Rhodospirillaceae</taxon>
        <taxon>Magnetospirillum</taxon>
    </lineage>
</organism>
<feature type="chain" id="PRO_0000108350" description="Cytochrome c2 iso-2">
    <location>
        <begin position="1"/>
        <end position="96"/>
    </location>
</feature>
<feature type="binding site" description="covalent">
    <location>
        <position position="10"/>
    </location>
    <ligand>
        <name>heme c</name>
        <dbReference type="ChEBI" id="CHEBI:61717"/>
    </ligand>
</feature>
<feature type="binding site" description="covalent">
    <location>
        <position position="13"/>
    </location>
    <ligand>
        <name>heme c</name>
        <dbReference type="ChEBI" id="CHEBI:61717"/>
    </ligand>
</feature>
<feature type="binding site" description="axial binding residue">
    <location>
        <position position="14"/>
    </location>
    <ligand>
        <name>heme c</name>
        <dbReference type="ChEBI" id="CHEBI:61717"/>
    </ligand>
    <ligandPart>
        <name>Fe</name>
        <dbReference type="ChEBI" id="CHEBI:18248"/>
    </ligandPart>
</feature>
<feature type="binding site" description="axial binding residue">
    <location>
        <position position="75"/>
    </location>
    <ligand>
        <name>heme c</name>
        <dbReference type="ChEBI" id="CHEBI:61717"/>
    </ligand>
    <ligandPart>
        <name>Fe</name>
        <dbReference type="ChEBI" id="CHEBI:18248"/>
    </ligandPart>
</feature>
<feature type="sequence variant" description="In about 30% of the molecules.">
    <original>Y</original>
    <variation>F</variation>
    <location>
        <position position="62"/>
    </location>
</feature>
<name>CYC22_MAGFU</name>